<evidence type="ECO:0000255" key="1">
    <source>
        <dbReference type="HAMAP-Rule" id="MF_01393"/>
    </source>
</evidence>
<dbReference type="EMBL" id="CP000847">
    <property type="protein sequence ID" value="ABV74383.1"/>
    <property type="molecule type" value="Genomic_DNA"/>
</dbReference>
<dbReference type="RefSeq" id="WP_012013253.1">
    <property type="nucleotide sequence ID" value="NC_009881.1"/>
</dbReference>
<dbReference type="SMR" id="A8GLV8"/>
<dbReference type="STRING" id="293614.A1C_00250"/>
<dbReference type="KEGG" id="rak:A1C_00250"/>
<dbReference type="eggNOG" id="COG0356">
    <property type="taxonomic scope" value="Bacteria"/>
</dbReference>
<dbReference type="HOGENOM" id="CLU_041018_0_2_5"/>
<dbReference type="Proteomes" id="UP000006830">
    <property type="component" value="Chromosome"/>
</dbReference>
<dbReference type="GO" id="GO:0005886">
    <property type="term" value="C:plasma membrane"/>
    <property type="evidence" value="ECO:0007669"/>
    <property type="project" value="UniProtKB-SubCell"/>
</dbReference>
<dbReference type="GO" id="GO:0045259">
    <property type="term" value="C:proton-transporting ATP synthase complex"/>
    <property type="evidence" value="ECO:0007669"/>
    <property type="project" value="UniProtKB-KW"/>
</dbReference>
<dbReference type="GO" id="GO:0046933">
    <property type="term" value="F:proton-transporting ATP synthase activity, rotational mechanism"/>
    <property type="evidence" value="ECO:0007669"/>
    <property type="project" value="UniProtKB-UniRule"/>
</dbReference>
<dbReference type="CDD" id="cd00310">
    <property type="entry name" value="ATP-synt_Fo_a_6"/>
    <property type="match status" value="1"/>
</dbReference>
<dbReference type="FunFam" id="1.20.120.220:FF:000003">
    <property type="entry name" value="ATP synthase subunit a"/>
    <property type="match status" value="1"/>
</dbReference>
<dbReference type="Gene3D" id="1.20.120.220">
    <property type="entry name" value="ATP synthase, F0 complex, subunit A"/>
    <property type="match status" value="1"/>
</dbReference>
<dbReference type="HAMAP" id="MF_01393">
    <property type="entry name" value="ATP_synth_a_bact"/>
    <property type="match status" value="1"/>
</dbReference>
<dbReference type="InterPro" id="IPR000568">
    <property type="entry name" value="ATP_synth_F0_asu"/>
</dbReference>
<dbReference type="InterPro" id="IPR023011">
    <property type="entry name" value="ATP_synth_F0_asu_AS"/>
</dbReference>
<dbReference type="InterPro" id="IPR045083">
    <property type="entry name" value="ATP_synth_F0_asu_bact/mt"/>
</dbReference>
<dbReference type="InterPro" id="IPR035908">
    <property type="entry name" value="F0_ATP_A_sf"/>
</dbReference>
<dbReference type="NCBIfam" id="TIGR01131">
    <property type="entry name" value="ATP_synt_6_or_A"/>
    <property type="match status" value="1"/>
</dbReference>
<dbReference type="NCBIfam" id="NF004482">
    <property type="entry name" value="PRK05815.2-4"/>
    <property type="match status" value="1"/>
</dbReference>
<dbReference type="PANTHER" id="PTHR11410">
    <property type="entry name" value="ATP SYNTHASE SUBUNIT A"/>
    <property type="match status" value="1"/>
</dbReference>
<dbReference type="PANTHER" id="PTHR11410:SF0">
    <property type="entry name" value="ATP SYNTHASE SUBUNIT A"/>
    <property type="match status" value="1"/>
</dbReference>
<dbReference type="Pfam" id="PF00119">
    <property type="entry name" value="ATP-synt_A"/>
    <property type="match status" value="1"/>
</dbReference>
<dbReference type="PRINTS" id="PR00123">
    <property type="entry name" value="ATPASEA"/>
</dbReference>
<dbReference type="SUPFAM" id="SSF81336">
    <property type="entry name" value="F1F0 ATP synthase subunit A"/>
    <property type="match status" value="1"/>
</dbReference>
<dbReference type="PROSITE" id="PS00449">
    <property type="entry name" value="ATPASE_A"/>
    <property type="match status" value="1"/>
</dbReference>
<reference key="1">
    <citation type="submission" date="2007-09" db="EMBL/GenBank/DDBJ databases">
        <title>Complete genome sequence of Rickettsia akari.</title>
        <authorList>
            <person name="Madan A."/>
            <person name="Fahey J."/>
            <person name="Helton E."/>
            <person name="Ketteman M."/>
            <person name="Madan A."/>
            <person name="Rodrigues S."/>
            <person name="Sanchez A."/>
            <person name="Whiting M."/>
            <person name="Dasch G."/>
            <person name="Eremeeva M."/>
        </authorList>
    </citation>
    <scope>NUCLEOTIDE SEQUENCE [LARGE SCALE GENOMIC DNA]</scope>
    <source>
        <strain>Hartford</strain>
    </source>
</reference>
<keyword id="KW-0066">ATP synthesis</keyword>
<keyword id="KW-0997">Cell inner membrane</keyword>
<keyword id="KW-1003">Cell membrane</keyword>
<keyword id="KW-0138">CF(0)</keyword>
<keyword id="KW-0375">Hydrogen ion transport</keyword>
<keyword id="KW-0406">Ion transport</keyword>
<keyword id="KW-0472">Membrane</keyword>
<keyword id="KW-0812">Transmembrane</keyword>
<keyword id="KW-1133">Transmembrane helix</keyword>
<keyword id="KW-0813">Transport</keyword>
<comment type="function">
    <text evidence="1">Key component of the proton channel; it plays a direct role in the translocation of protons across the membrane.</text>
</comment>
<comment type="subunit">
    <text evidence="1">F-type ATPases have 2 components, CF(1) - the catalytic core - and CF(0) - the membrane proton channel. CF(1) has five subunits: alpha(3), beta(3), gamma(1), delta(1), epsilon(1). CF(0) has three main subunits: a(1), b(2) and c(9-12). The alpha and beta chains form an alternating ring which encloses part of the gamma chain. CF(1) is attached to CF(0) by a central stalk formed by the gamma and epsilon chains, while a peripheral stalk is formed by the delta and b chains.</text>
</comment>
<comment type="subcellular location">
    <subcellularLocation>
        <location evidence="1">Cell inner membrane</location>
        <topology evidence="1">Multi-pass membrane protein</topology>
    </subcellularLocation>
</comment>
<comment type="similarity">
    <text evidence="1">Belongs to the ATPase A chain family.</text>
</comment>
<sequence>MTHSPLAQFDIKKLIDIKMFGFDISFTNSSIYMLLASILALTYFYLAFYNRKLVPSRLQVSAEIVYNLVADMLNQNIGVKGHKFIPLVFSLFIFVLFSNLLGMTPYSFTATSHIIVTFTLAIIVFLTVTIVGFVKHGLRFLTLFLPYGTPLWLAPLMIVIELFTYLAKPVSLSLRLAANMMAGHVLLKVIAGFTVSLMIYLKFLPIPIIVILIGFEIFVAILQAYIFTILSCMYLNDAINLH</sequence>
<proteinExistence type="inferred from homology"/>
<name>ATP6_RICAH</name>
<gene>
    <name evidence="1" type="primary">atpB</name>
    <name type="ordered locus">A1C_00250</name>
</gene>
<organism>
    <name type="scientific">Rickettsia akari (strain Hartford)</name>
    <dbReference type="NCBI Taxonomy" id="293614"/>
    <lineage>
        <taxon>Bacteria</taxon>
        <taxon>Pseudomonadati</taxon>
        <taxon>Pseudomonadota</taxon>
        <taxon>Alphaproteobacteria</taxon>
        <taxon>Rickettsiales</taxon>
        <taxon>Rickettsiaceae</taxon>
        <taxon>Rickettsieae</taxon>
        <taxon>Rickettsia</taxon>
        <taxon>spotted fever group</taxon>
    </lineage>
</organism>
<protein>
    <recommendedName>
        <fullName evidence="1">ATP synthase subunit a</fullName>
    </recommendedName>
    <alternativeName>
        <fullName evidence="1">ATP synthase F0 sector subunit a</fullName>
    </alternativeName>
    <alternativeName>
        <fullName evidence="1">F-ATPase subunit 6</fullName>
    </alternativeName>
</protein>
<accession>A8GLV8</accession>
<feature type="chain" id="PRO_0000362423" description="ATP synthase subunit a">
    <location>
        <begin position="1"/>
        <end position="242"/>
    </location>
</feature>
<feature type="transmembrane region" description="Helical" evidence="1">
    <location>
        <begin position="29"/>
        <end position="49"/>
    </location>
</feature>
<feature type="transmembrane region" description="Helical" evidence="1">
    <location>
        <begin position="84"/>
        <end position="104"/>
    </location>
</feature>
<feature type="transmembrane region" description="Helical" evidence="1">
    <location>
        <begin position="114"/>
        <end position="134"/>
    </location>
</feature>
<feature type="transmembrane region" description="Helical" evidence="1">
    <location>
        <begin position="140"/>
        <end position="160"/>
    </location>
</feature>
<feature type="transmembrane region" description="Helical" evidence="1">
    <location>
        <begin position="181"/>
        <end position="201"/>
    </location>
</feature>
<feature type="transmembrane region" description="Helical" evidence="1">
    <location>
        <begin position="203"/>
        <end position="223"/>
    </location>
</feature>